<proteinExistence type="evidence at protein level"/>
<dbReference type="EMBL" id="V00294">
    <property type="protein sequence ID" value="CAA23569.1"/>
    <property type="molecule type" value="Genomic_DNA"/>
</dbReference>
<dbReference type="EMBL" id="X58469">
    <property type="protein sequence ID" value="CAA41383.1"/>
    <property type="molecule type" value="Genomic_DNA"/>
</dbReference>
<dbReference type="EMBL" id="U86347">
    <property type="protein sequence ID" value="AAB47270.1"/>
    <property type="status" value="ALT_INIT"/>
    <property type="molecule type" value="Genomic_DNA"/>
</dbReference>
<dbReference type="EMBL" id="J01636">
    <property type="protein sequence ID" value="AAA24052.1"/>
    <property type="molecule type" value="Genomic_DNA"/>
</dbReference>
<dbReference type="EMBL" id="U72488">
    <property type="protein sequence ID" value="AAB36549.1"/>
    <property type="molecule type" value="Genomic_DNA"/>
</dbReference>
<dbReference type="EMBL" id="U78872">
    <property type="protein sequence ID" value="AAB37348.1"/>
    <property type="molecule type" value="Genomic_DNA"/>
</dbReference>
<dbReference type="EMBL" id="U78873">
    <property type="protein sequence ID" value="AAB37351.1"/>
    <property type="molecule type" value="Genomic_DNA"/>
</dbReference>
<dbReference type="EMBL" id="U78874">
    <property type="protein sequence ID" value="AAB37354.1"/>
    <property type="molecule type" value="Genomic_DNA"/>
</dbReference>
<dbReference type="EMBL" id="U73857">
    <property type="protein sequence ID" value="AAB18069.1"/>
    <property type="status" value="ALT_INIT"/>
    <property type="molecule type" value="Genomic_DNA"/>
</dbReference>
<dbReference type="EMBL" id="U00096">
    <property type="protein sequence ID" value="AAC73448.1"/>
    <property type="molecule type" value="Genomic_DNA"/>
</dbReference>
<dbReference type="EMBL" id="AP009048">
    <property type="protein sequence ID" value="BAE76127.1"/>
    <property type="molecule type" value="Genomic_DNA"/>
</dbReference>
<dbReference type="PIR" id="A93198">
    <property type="entry name" value="RPECL"/>
</dbReference>
<dbReference type="RefSeq" id="NP_414879.3">
    <property type="nucleotide sequence ID" value="NC_000913.3"/>
</dbReference>
<dbReference type="RefSeq" id="WP_000805902.1">
    <property type="nucleotide sequence ID" value="NZ_STEB01000036.1"/>
</dbReference>
<dbReference type="PDB" id="1CJG">
    <property type="method" value="NMR"/>
    <property type="chains" value="A/B=1-62"/>
</dbReference>
<dbReference type="PDB" id="1EFA">
    <property type="method" value="X-ray"/>
    <property type="resolution" value="2.60 A"/>
    <property type="chains" value="A/B/C=1-333"/>
</dbReference>
<dbReference type="PDB" id="1JWL">
    <property type="method" value="X-ray"/>
    <property type="resolution" value="4.00 A"/>
    <property type="chains" value="A/B/C=1-333"/>
</dbReference>
<dbReference type="PDB" id="1JYE">
    <property type="method" value="X-ray"/>
    <property type="resolution" value="1.70 A"/>
    <property type="chains" value="A=1-349"/>
</dbReference>
<dbReference type="PDB" id="1JYF">
    <property type="method" value="X-ray"/>
    <property type="resolution" value="3.00 A"/>
    <property type="chains" value="A=1-349"/>
</dbReference>
<dbReference type="PDB" id="1L1M">
    <property type="method" value="NMR"/>
    <property type="chains" value="A/B=1-62"/>
</dbReference>
<dbReference type="PDB" id="1LBG">
    <property type="method" value="X-ray"/>
    <property type="resolution" value="4.80 A"/>
    <property type="chains" value="A/B/C/D=1-360"/>
</dbReference>
<dbReference type="PDB" id="1LBH">
    <property type="method" value="X-ray"/>
    <property type="resolution" value="3.20 A"/>
    <property type="chains" value="A/B/C/D=1-360"/>
</dbReference>
<dbReference type="PDB" id="1LBI">
    <property type="method" value="X-ray"/>
    <property type="resolution" value="2.70 A"/>
    <property type="chains" value="A/B/C/D=1-360"/>
</dbReference>
<dbReference type="PDB" id="1LCC">
    <property type="method" value="NMR"/>
    <property type="chains" value="A=1-51"/>
</dbReference>
<dbReference type="PDB" id="1LCD">
    <property type="method" value="NMR"/>
    <property type="chains" value="A=1-51"/>
</dbReference>
<dbReference type="PDB" id="1LQC">
    <property type="method" value="NMR"/>
    <property type="chains" value="A=1-56"/>
</dbReference>
<dbReference type="PDB" id="1OSL">
    <property type="method" value="NMR"/>
    <property type="chains" value="A/B=1-62"/>
</dbReference>
<dbReference type="PDB" id="1TLF">
    <property type="method" value="X-ray"/>
    <property type="resolution" value="2.60 A"/>
    <property type="chains" value="A/B/C/D=60-360"/>
</dbReference>
<dbReference type="PDB" id="2BJC">
    <property type="method" value="NMR"/>
    <property type="chains" value="A/B=1-62"/>
</dbReference>
<dbReference type="PDB" id="2KEI">
    <property type="method" value="NMR"/>
    <property type="chains" value="A/B=1-62"/>
</dbReference>
<dbReference type="PDB" id="2KEJ">
    <property type="method" value="NMR"/>
    <property type="chains" value="A/B=1-62"/>
</dbReference>
<dbReference type="PDB" id="2KEK">
    <property type="method" value="NMR"/>
    <property type="chains" value="A/B=1-62"/>
</dbReference>
<dbReference type="PDB" id="2P9H">
    <property type="method" value="X-ray"/>
    <property type="resolution" value="2.00 A"/>
    <property type="chains" value="A/B=62-330"/>
</dbReference>
<dbReference type="PDB" id="2PAF">
    <property type="method" value="X-ray"/>
    <property type="resolution" value="3.50 A"/>
    <property type="chains" value="A/B=62-330"/>
</dbReference>
<dbReference type="PDB" id="2PE5">
    <property type="method" value="X-ray"/>
    <property type="resolution" value="3.50 A"/>
    <property type="chains" value="A/B/C=2-331"/>
</dbReference>
<dbReference type="PDB" id="3EDC">
    <property type="method" value="X-ray"/>
    <property type="resolution" value="2.10 A"/>
    <property type="chains" value="A/B/C/D=1-360"/>
</dbReference>
<dbReference type="PDB" id="4RZS">
    <property type="method" value="X-ray"/>
    <property type="resolution" value="2.71 A"/>
    <property type="chains" value="A/B/C/D=2-360"/>
</dbReference>
<dbReference type="PDB" id="4RZT">
    <property type="method" value="X-ray"/>
    <property type="resolution" value="3.10 A"/>
    <property type="chains" value="A/B/C/D=2-360"/>
</dbReference>
<dbReference type="PDB" id="8GOH">
    <property type="method" value="X-ray"/>
    <property type="resolution" value="1.10 A"/>
    <property type="chains" value="A/B/C/D/E/F/G/H=336-358"/>
</dbReference>
<dbReference type="PDBsum" id="1CJG"/>
<dbReference type="PDBsum" id="1EFA"/>
<dbReference type="PDBsum" id="1JWL"/>
<dbReference type="PDBsum" id="1JYE"/>
<dbReference type="PDBsum" id="1JYF"/>
<dbReference type="PDBsum" id="1L1M"/>
<dbReference type="PDBsum" id="1LBG"/>
<dbReference type="PDBsum" id="1LBH"/>
<dbReference type="PDBsum" id="1LBI"/>
<dbReference type="PDBsum" id="1LCC"/>
<dbReference type="PDBsum" id="1LCD"/>
<dbReference type="PDBsum" id="1LQC"/>
<dbReference type="PDBsum" id="1OSL"/>
<dbReference type="PDBsum" id="1TLF"/>
<dbReference type="PDBsum" id="2BJC"/>
<dbReference type="PDBsum" id="2KEI"/>
<dbReference type="PDBsum" id="2KEJ"/>
<dbReference type="PDBsum" id="2KEK"/>
<dbReference type="PDBsum" id="2P9H"/>
<dbReference type="PDBsum" id="2PAF"/>
<dbReference type="PDBsum" id="2PE5"/>
<dbReference type="PDBsum" id="3EDC"/>
<dbReference type="PDBsum" id="4RZS"/>
<dbReference type="PDBsum" id="4RZT"/>
<dbReference type="PDBsum" id="8GOH"/>
<dbReference type="BMRB" id="P03023"/>
<dbReference type="SMR" id="P03023"/>
<dbReference type="BioGRID" id="4260668">
    <property type="interactions" value="106"/>
</dbReference>
<dbReference type="BioGRID" id="849401">
    <property type="interactions" value="1"/>
</dbReference>
<dbReference type="DIP" id="DIP-10079N"/>
<dbReference type="FunCoup" id="P03023">
    <property type="interactions" value="70"/>
</dbReference>
<dbReference type="IntAct" id="P03023">
    <property type="interactions" value="6"/>
</dbReference>
<dbReference type="MINT" id="P03023"/>
<dbReference type="STRING" id="511145.b0345"/>
<dbReference type="DrugBank" id="DB01862">
    <property type="generic name" value="Isopropyl beta-D-thiogalactopyranoside"/>
</dbReference>
<dbReference type="DrugBank" id="DB08297">
    <property type="generic name" value="ORTHONITROPHENYL-BETA-D-FUCOPYRANOSIDE"/>
</dbReference>
<dbReference type="jPOST" id="P03023"/>
<dbReference type="PaxDb" id="511145-b0345"/>
<dbReference type="EnsemblBacteria" id="AAC73448">
    <property type="protein sequence ID" value="AAC73448"/>
    <property type="gene ID" value="b0345"/>
</dbReference>
<dbReference type="GeneID" id="945007"/>
<dbReference type="KEGG" id="ecj:JW0336"/>
<dbReference type="KEGG" id="eco:b0345"/>
<dbReference type="KEGG" id="ecoc:C3026_04265"/>
<dbReference type="KEGG" id="ecoc:C3026_04585"/>
<dbReference type="KEGG" id="ecoc:C3026_04905"/>
<dbReference type="KEGG" id="ecoc:C3026_24860"/>
<dbReference type="PATRIC" id="fig|511145.12.peg.353"/>
<dbReference type="EchoBASE" id="EB0520"/>
<dbReference type="eggNOG" id="COG1609">
    <property type="taxonomic scope" value="Bacteria"/>
</dbReference>
<dbReference type="HOGENOM" id="CLU_037628_6_4_6"/>
<dbReference type="InParanoid" id="P03023"/>
<dbReference type="OMA" id="EPFEYSR"/>
<dbReference type="OrthoDB" id="9798934at2"/>
<dbReference type="PhylomeDB" id="P03023"/>
<dbReference type="BioCyc" id="EcoCyc:PD00763"/>
<dbReference type="EvolutionaryTrace" id="P03023"/>
<dbReference type="PRO" id="PR:P03023"/>
<dbReference type="Proteomes" id="UP000000625">
    <property type="component" value="Chromosome"/>
</dbReference>
<dbReference type="GO" id="GO:0005829">
    <property type="term" value="C:cytosol"/>
    <property type="evidence" value="ECO:0007005"/>
    <property type="project" value="UniProtKB"/>
</dbReference>
<dbReference type="GO" id="GO:0000987">
    <property type="term" value="F:cis-regulatory region sequence-specific DNA binding"/>
    <property type="evidence" value="ECO:0000314"/>
    <property type="project" value="EcoCyc"/>
</dbReference>
<dbReference type="GO" id="GO:0003700">
    <property type="term" value="F:DNA-binding transcription factor activity"/>
    <property type="evidence" value="ECO:0000318"/>
    <property type="project" value="GO_Central"/>
</dbReference>
<dbReference type="GO" id="GO:0001217">
    <property type="term" value="F:DNA-binding transcription repressor activity"/>
    <property type="evidence" value="ECO:0000314"/>
    <property type="project" value="EcoCyc"/>
</dbReference>
<dbReference type="GO" id="GO:0042802">
    <property type="term" value="F:identical protein binding"/>
    <property type="evidence" value="ECO:0000353"/>
    <property type="project" value="IntAct"/>
</dbReference>
<dbReference type="GO" id="GO:0000976">
    <property type="term" value="F:transcription cis-regulatory region binding"/>
    <property type="evidence" value="ECO:0000318"/>
    <property type="project" value="GO_Central"/>
</dbReference>
<dbReference type="GO" id="GO:0045892">
    <property type="term" value="P:negative regulation of DNA-templated transcription"/>
    <property type="evidence" value="ECO:0000315"/>
    <property type="project" value="EcoCyc"/>
</dbReference>
<dbReference type="GO" id="GO:0006355">
    <property type="term" value="P:regulation of DNA-templated transcription"/>
    <property type="evidence" value="ECO:0000318"/>
    <property type="project" value="GO_Central"/>
</dbReference>
<dbReference type="CDD" id="cd01392">
    <property type="entry name" value="HTH_LacI"/>
    <property type="match status" value="1"/>
</dbReference>
<dbReference type="CDD" id="cd01537">
    <property type="entry name" value="PBP1_repressor_sugar_binding-like"/>
    <property type="match status" value="1"/>
</dbReference>
<dbReference type="FunFam" id="1.10.260.40:FF:000002">
    <property type="entry name" value="HTH-type transcriptional repressor PurR"/>
    <property type="match status" value="1"/>
</dbReference>
<dbReference type="Gene3D" id="3.40.50.2300">
    <property type="match status" value="2"/>
</dbReference>
<dbReference type="Gene3D" id="1.10.260.40">
    <property type="entry name" value="lambda repressor-like DNA-binding domains"/>
    <property type="match status" value="1"/>
</dbReference>
<dbReference type="InterPro" id="IPR000843">
    <property type="entry name" value="HTH_LacI"/>
</dbReference>
<dbReference type="InterPro" id="IPR046335">
    <property type="entry name" value="LacI/GalR-like_sensor"/>
</dbReference>
<dbReference type="InterPro" id="IPR010982">
    <property type="entry name" value="Lambda_DNA-bd_dom_sf"/>
</dbReference>
<dbReference type="InterPro" id="IPR028082">
    <property type="entry name" value="Peripla_BP_I"/>
</dbReference>
<dbReference type="NCBIfam" id="NF007075">
    <property type="entry name" value="PRK09526.1"/>
    <property type="match status" value="1"/>
</dbReference>
<dbReference type="PANTHER" id="PTHR30146">
    <property type="entry name" value="LACI-RELATED TRANSCRIPTIONAL REPRESSOR"/>
    <property type="match status" value="1"/>
</dbReference>
<dbReference type="PANTHER" id="PTHR30146:SF153">
    <property type="entry name" value="LACTOSE OPERON REPRESSOR"/>
    <property type="match status" value="1"/>
</dbReference>
<dbReference type="Pfam" id="PF00356">
    <property type="entry name" value="LacI"/>
    <property type="match status" value="1"/>
</dbReference>
<dbReference type="Pfam" id="PF13377">
    <property type="entry name" value="Peripla_BP_3"/>
    <property type="match status" value="1"/>
</dbReference>
<dbReference type="PRINTS" id="PR00036">
    <property type="entry name" value="HTHLACI"/>
</dbReference>
<dbReference type="SMART" id="SM00354">
    <property type="entry name" value="HTH_LACI"/>
    <property type="match status" value="1"/>
</dbReference>
<dbReference type="SUPFAM" id="SSF47413">
    <property type="entry name" value="lambda repressor-like DNA-binding domains"/>
    <property type="match status" value="1"/>
</dbReference>
<dbReference type="SUPFAM" id="SSF53822">
    <property type="entry name" value="Periplasmic binding protein-like I"/>
    <property type="match status" value="1"/>
</dbReference>
<dbReference type="PROSITE" id="PS00356">
    <property type="entry name" value="HTH_LACI_1"/>
    <property type="match status" value="1"/>
</dbReference>
<dbReference type="PROSITE" id="PS50932">
    <property type="entry name" value="HTH_LACI_2"/>
    <property type="match status" value="1"/>
</dbReference>
<evidence type="ECO:0000255" key="1">
    <source>
        <dbReference type="PROSITE-ProRule" id="PRU00111"/>
    </source>
</evidence>
<evidence type="ECO:0000305" key="2"/>
<evidence type="ECO:0007829" key="3">
    <source>
        <dbReference type="PDB" id="1CJG"/>
    </source>
</evidence>
<evidence type="ECO:0007829" key="4">
    <source>
        <dbReference type="PDB" id="1EFA"/>
    </source>
</evidence>
<evidence type="ECO:0007829" key="5">
    <source>
        <dbReference type="PDB" id="1JYE"/>
    </source>
</evidence>
<evidence type="ECO:0007829" key="6">
    <source>
        <dbReference type="PDB" id="1LBH"/>
    </source>
</evidence>
<evidence type="ECO:0007829" key="7">
    <source>
        <dbReference type="PDB" id="1LQC"/>
    </source>
</evidence>
<evidence type="ECO:0007829" key="8">
    <source>
        <dbReference type="PDB" id="2BJC"/>
    </source>
</evidence>
<evidence type="ECO:0007829" key="9">
    <source>
        <dbReference type="PDB" id="3EDC"/>
    </source>
</evidence>
<gene>
    <name type="primary">lacI</name>
    <name type="ordered locus">b0345</name>
    <name type="ordered locus">JW0336</name>
</gene>
<name>LACI_ECOLI</name>
<accession>P03023</accession>
<accession>O09196</accession>
<accession>P71309</accession>
<accession>Q2MC79</accession>
<accession>Q47338</accession>
<feature type="chain" id="PRO_0000107963" description="Lactose operon repressor">
    <location>
        <begin position="1"/>
        <end position="360"/>
    </location>
</feature>
<feature type="domain" description="HTH lacI-type" evidence="1">
    <location>
        <begin position="1"/>
        <end position="58"/>
    </location>
</feature>
<feature type="DNA-binding region" description="H-T-H motif" evidence="1">
    <location>
        <begin position="6"/>
        <end position="25"/>
    </location>
</feature>
<feature type="sequence variant" description="In T41 mutant.">
    <original>Y</original>
    <variation>D</variation>
    <location>
        <position position="282"/>
    </location>
</feature>
<feature type="mutagenesis site" description="Broadening of specificity.">
    <original>Y</original>
    <variation>H</variation>
    <location>
        <position position="17"/>
    </location>
</feature>
<feature type="mutagenesis site" description="Recognizes an operator variant.">
    <original>R</original>
    <variation>N</variation>
    <location>
        <position position="22"/>
    </location>
</feature>
<feature type="sequence conflict" description="In Ref. 1, 4 and 7." evidence="2" ref="1 4 7">
    <original>L</original>
    <variation>S</variation>
    <location>
        <position position="286"/>
    </location>
</feature>
<feature type="helix" evidence="4">
    <location>
        <begin position="6"/>
        <end position="11"/>
    </location>
</feature>
<feature type="turn" evidence="4">
    <location>
        <begin position="12"/>
        <end position="14"/>
    </location>
</feature>
<feature type="helix" evidence="4">
    <location>
        <begin position="17"/>
        <end position="24"/>
    </location>
</feature>
<feature type="turn" evidence="7">
    <location>
        <begin position="25"/>
        <end position="27"/>
    </location>
</feature>
<feature type="strand" evidence="3">
    <location>
        <begin position="28"/>
        <end position="30"/>
    </location>
</feature>
<feature type="helix" evidence="4">
    <location>
        <begin position="33"/>
        <end position="45"/>
    </location>
</feature>
<feature type="helix" evidence="4">
    <location>
        <begin position="51"/>
        <end position="56"/>
    </location>
</feature>
<feature type="helix" evidence="8">
    <location>
        <begin position="58"/>
        <end position="61"/>
    </location>
</feature>
<feature type="strand" evidence="5">
    <location>
        <begin position="63"/>
        <end position="69"/>
    </location>
</feature>
<feature type="helix" evidence="5">
    <location>
        <begin position="74"/>
        <end position="89"/>
    </location>
</feature>
<feature type="strand" evidence="5">
    <location>
        <begin position="93"/>
        <end position="98"/>
    </location>
</feature>
<feature type="strand" evidence="5">
    <location>
        <begin position="101"/>
        <end position="103"/>
    </location>
</feature>
<feature type="helix" evidence="5">
    <location>
        <begin position="104"/>
        <end position="115"/>
    </location>
</feature>
<feature type="turn" evidence="5">
    <location>
        <begin position="116"/>
        <end position="118"/>
    </location>
</feature>
<feature type="strand" evidence="5">
    <location>
        <begin position="122"/>
        <end position="126"/>
    </location>
</feature>
<feature type="helix" evidence="5">
    <location>
        <begin position="130"/>
        <end position="139"/>
    </location>
</feature>
<feature type="turn" evidence="5">
    <location>
        <begin position="140"/>
        <end position="142"/>
    </location>
</feature>
<feature type="strand" evidence="5">
    <location>
        <begin position="145"/>
        <end position="150"/>
    </location>
</feature>
<feature type="strand" evidence="5">
    <location>
        <begin position="154"/>
        <end position="156"/>
    </location>
</feature>
<feature type="strand" evidence="5">
    <location>
        <begin position="158"/>
        <end position="161"/>
    </location>
</feature>
<feature type="helix" evidence="5">
    <location>
        <begin position="163"/>
        <end position="177"/>
    </location>
</feature>
<feature type="strand" evidence="5">
    <location>
        <begin position="181"/>
        <end position="186"/>
    </location>
</feature>
<feature type="helix" evidence="5">
    <location>
        <begin position="192"/>
        <end position="207"/>
    </location>
</feature>
<feature type="strand" evidence="5">
    <location>
        <begin position="213"/>
        <end position="217"/>
    </location>
</feature>
<feature type="helix" evidence="5">
    <location>
        <begin position="222"/>
        <end position="234"/>
    </location>
</feature>
<feature type="strand" evidence="5">
    <location>
        <begin position="240"/>
        <end position="246"/>
    </location>
</feature>
<feature type="helix" evidence="5">
    <location>
        <begin position="247"/>
        <end position="259"/>
    </location>
</feature>
<feature type="turn" evidence="5">
    <location>
        <begin position="265"/>
        <end position="267"/>
    </location>
</feature>
<feature type="strand" evidence="5">
    <location>
        <begin position="268"/>
        <end position="271"/>
    </location>
</feature>
<feature type="helix" evidence="5">
    <location>
        <begin position="277"/>
        <end position="281"/>
    </location>
</feature>
<feature type="strand" evidence="5">
    <location>
        <begin position="282"/>
        <end position="284"/>
    </location>
</feature>
<feature type="strand" evidence="5">
    <location>
        <begin position="287"/>
        <end position="290"/>
    </location>
</feature>
<feature type="helix" evidence="5">
    <location>
        <begin position="293"/>
        <end position="308"/>
    </location>
</feature>
<feature type="strand" evidence="5">
    <location>
        <begin position="314"/>
        <end position="319"/>
    </location>
</feature>
<feature type="strand" evidence="5">
    <location>
        <begin position="322"/>
        <end position="324"/>
    </location>
</feature>
<feature type="strand" evidence="6">
    <location>
        <begin position="333"/>
        <end position="338"/>
    </location>
</feature>
<feature type="helix" evidence="9">
    <location>
        <begin position="339"/>
        <end position="354"/>
    </location>
</feature>
<organism>
    <name type="scientific">Escherichia coli (strain K12)</name>
    <dbReference type="NCBI Taxonomy" id="83333"/>
    <lineage>
        <taxon>Bacteria</taxon>
        <taxon>Pseudomonadati</taxon>
        <taxon>Pseudomonadota</taxon>
        <taxon>Gammaproteobacteria</taxon>
        <taxon>Enterobacterales</taxon>
        <taxon>Enterobacteriaceae</taxon>
        <taxon>Escherichia</taxon>
    </lineage>
</organism>
<keyword id="KW-0002">3D-structure</keyword>
<keyword id="KW-0903">Direct protein sequencing</keyword>
<keyword id="KW-0238">DNA-binding</keyword>
<keyword id="KW-1185">Reference proteome</keyword>
<keyword id="KW-0678">Repressor</keyword>
<keyword id="KW-0804">Transcription</keyword>
<keyword id="KW-0805">Transcription regulation</keyword>
<reference key="1">
    <citation type="journal article" date="1978" name="Nature">
        <title>Sequence of the lacI gene.</title>
        <authorList>
            <person name="Farabaugh P.J."/>
        </authorList>
    </citation>
    <scope>NUCLEOTIDE SEQUENCE [GENOMIC DNA]</scope>
</reference>
<reference key="2">
    <citation type="submission" date="1991-05" db="EMBL/GenBank/DDBJ databases">
        <authorList>
            <person name="Chen J."/>
            <person name="Matthews K.K.S.M."/>
        </authorList>
    </citation>
    <scope>NUCLEOTIDE SEQUENCE [GENOMIC DNA]</scope>
</reference>
<reference key="3">
    <citation type="submission" date="1997-01" db="EMBL/GenBank/DDBJ databases">
        <authorList>
            <person name="Marsh S."/>
        </authorList>
    </citation>
    <scope>NUCLEOTIDE SEQUENCE [GENOMIC DNA]</scope>
</reference>
<reference key="4">
    <citation type="submission" date="1997-01" db="EMBL/GenBank/DDBJ databases">
        <title>Sequence of minutes 4-25 of Escherichia coli.</title>
        <authorList>
            <person name="Chung E."/>
            <person name="Allen E."/>
            <person name="Araujo R."/>
            <person name="Aparicio A.M."/>
            <person name="Davis K."/>
            <person name="Duncan M."/>
            <person name="Federspiel N."/>
            <person name="Hyman R."/>
            <person name="Kalman S."/>
            <person name="Komp C."/>
            <person name="Kurdi O."/>
            <person name="Lew H."/>
            <person name="Lin D."/>
            <person name="Namath A."/>
            <person name="Oefner P."/>
            <person name="Roberts D."/>
            <person name="Schramm S."/>
            <person name="Davis R.W."/>
        </authorList>
    </citation>
    <scope>NUCLEOTIDE SEQUENCE [LARGE SCALE GENOMIC DNA]</scope>
    <source>
        <strain>K12 / MG1655 / ATCC 47076</strain>
    </source>
</reference>
<reference key="5">
    <citation type="journal article" date="1997" name="Science">
        <title>The complete genome sequence of Escherichia coli K-12.</title>
        <authorList>
            <person name="Blattner F.R."/>
            <person name="Plunkett G. III"/>
            <person name="Bloch C.A."/>
            <person name="Perna N.T."/>
            <person name="Burland V."/>
            <person name="Riley M."/>
            <person name="Collado-Vides J."/>
            <person name="Glasner J.D."/>
            <person name="Rode C.K."/>
            <person name="Mayhew G.F."/>
            <person name="Gregor J."/>
            <person name="Davis N.W."/>
            <person name="Kirkpatrick H.A."/>
            <person name="Goeden M.A."/>
            <person name="Rose D.J."/>
            <person name="Mau B."/>
            <person name="Shao Y."/>
        </authorList>
    </citation>
    <scope>NUCLEOTIDE SEQUENCE [LARGE SCALE GENOMIC DNA]</scope>
    <source>
        <strain>K12 / MG1655 / ATCC 47076</strain>
    </source>
</reference>
<reference key="6">
    <citation type="journal article" date="2006" name="Mol. Syst. Biol.">
        <title>Highly accurate genome sequences of Escherichia coli K-12 strains MG1655 and W3110.</title>
        <authorList>
            <person name="Hayashi K."/>
            <person name="Morooka N."/>
            <person name="Yamamoto Y."/>
            <person name="Fujita K."/>
            <person name="Isono K."/>
            <person name="Choi S."/>
            <person name="Ohtsubo E."/>
            <person name="Baba T."/>
            <person name="Wanner B.L."/>
            <person name="Mori H."/>
            <person name="Horiuchi T."/>
        </authorList>
    </citation>
    <scope>NUCLEOTIDE SEQUENCE [LARGE SCALE GENOMIC DNA]</scope>
    <source>
        <strain>K12 / W3110 / ATCC 27325 / DSM 5911</strain>
    </source>
</reference>
<reference key="7">
    <citation type="journal article" date="1975" name="Eur. J. Biochem.">
        <title>Amino-acid sequence of lac repressor from Escherichia coli. Isolation, sequence analysis and sequence assembly of tryptic peptides and cyanogen-bromide fragments.</title>
        <authorList>
            <person name="Beyreuther K."/>
            <person name="Adler K."/>
            <person name="Fanning E."/>
            <person name="Murray C."/>
            <person name="Klemm A."/>
            <person name="Geisler N."/>
        </authorList>
    </citation>
    <scope>PROTEIN SEQUENCE OF 1-147; 159-230 AND 233-360</scope>
</reference>
<reference key="8">
    <citation type="journal article" date="1973" name="J. Biol. Chem.">
        <title>Lac repressor. Specific proteolytic destruction of the NH 2 -terminal region and loss of the deoxyribonucleic acid-binding activity.</title>
        <authorList>
            <person name="Platt T."/>
            <person name="Files J.G."/>
            <person name="Weber K."/>
        </authorList>
    </citation>
    <scope>PROTEIN SEQUENCE OF 1-59; 96-101; 206-215 AND 328-347</scope>
</reference>
<reference key="9">
    <citation type="journal article" date="1973" name="Proc. Natl. Acad. Sci. U.S.A.">
        <title>Reinitiation of a lac repressor fragment at a condon other than AUG.</title>
        <authorList>
            <person name="Ganem D."/>
            <person name="Miller J.H."/>
            <person name="Files J.G."/>
            <person name="Platt T."/>
            <person name="Weber K."/>
        </authorList>
    </citation>
    <scope>PROTEIN SEQUENCE OF 60-70; 73-78 AND 83-86</scope>
</reference>
<reference key="10">
    <citation type="journal article" date="1988" name="J. Mol. Biol.">
        <title>Missense mutation in the lacI gene of Escherichia coli. Inferences on the structure of the repressor protein.</title>
        <authorList>
            <person name="Gordon A.J.E."/>
            <person name="Burns P.A."/>
            <person name="Fix D.F."/>
            <person name="Yatagai F."/>
            <person name="Allen F.L."/>
            <person name="Horsfall M.J."/>
            <person name="Halliday J.A."/>
            <person name="Gray J."/>
            <person name="Bernelot-Moens C."/>
            <person name="Glickman B.W."/>
        </authorList>
    </citation>
    <scope>NUCLEOTIDE SEQUENCE [GENOMIC DNA] OF 1-60</scope>
</reference>
<reference key="11">
    <citation type="journal article" date="1995" name="FEBS Lett.">
        <title>Mechanism of Lac repressor switch-off: orientation of the Lac repressor DNA-binding domain is reversed upon inducer binding.</title>
        <authorList>
            <person name="Kamashev D.E."/>
            <person name="Esipova N.G."/>
            <person name="Ebralidse K.K."/>
            <person name="Mirzabekov A.D."/>
        </authorList>
    </citation>
    <scope>PROTEIN SEQUENCE OF 1-35</scope>
</reference>
<reference key="12">
    <citation type="journal article" date="1990" name="EMBO J.">
        <title>Mutant lac repressors with new specificities hint at rules for protein-DNA recognition.</title>
        <authorList>
            <person name="Lehming N."/>
            <person name="Sartorius J."/>
            <person name="Kisters-Woike B."/>
            <person name="von Wilcken-Bergmann B."/>
            <person name="Mueller-Hill B."/>
        </authorList>
    </citation>
    <scope>MUTAGENESIS</scope>
</reference>
<reference key="13">
    <citation type="journal article" date="1994" name="J. Mol. Biol.">
        <title>Genetic studies of the lac repressor. XIV. Analysis of 4000 altered Escherichia coli lac repressors reveals essential and non-essential residues, as well as 'spacers' which do not require a specific sequence.</title>
        <authorList>
            <person name="Markiewicz P."/>
            <person name="Kleina L.G."/>
            <person name="Cruz C."/>
            <person name="Ehret S."/>
            <person name="Miller J.H."/>
        </authorList>
    </citation>
    <scope>MUTAGENESIS</scope>
</reference>
<reference key="14">
    <citation type="journal article" date="1997" name="Electrophoresis">
        <title>Escherichia coli proteome analysis using the gene-protein database.</title>
        <authorList>
            <person name="VanBogelen R.A."/>
            <person name="Abshire K.Z."/>
            <person name="Moldover B."/>
            <person name="Olson E.R."/>
            <person name="Neidhardt F.C."/>
        </authorList>
    </citation>
    <scope>IDENTIFICATION BY 2D-GEL</scope>
</reference>
<reference key="15">
    <citation type="journal article" date="1991" name="Eur. J. Biochem.">
        <title>A model of the lac repressor-operator complex based on physical and genetic data.</title>
        <authorList>
            <person name="Kisters-Woike B."/>
            <person name="Lehming N."/>
            <person name="Sartorius J."/>
            <person name="von Wilcken-Bergmann B."/>
            <person name="Mueller-Hill B."/>
        </authorList>
    </citation>
    <scope>3D-STRUCTURE MODELING</scope>
</reference>
<reference key="16">
    <citation type="journal article" date="1991" name="Nucleic Acids Res.">
        <title>Orientation of the Lac repressor DNA binding domain in complex with the left lac operator half site characterized by affinity cleaving.</title>
        <authorList>
            <person name="Shin J.A."/>
            <person name="Ebright R.H."/>
            <person name="Dervan P.B."/>
        </authorList>
    </citation>
    <scope>3D-STRUCTURE MODELING OF 1-56</scope>
</reference>
<reference key="17">
    <citation type="journal article" date="1988" name="Protein Seq. Data Anal.">
        <title>The interaction of lac repressor headpiece with its operator: an NMR view.</title>
        <authorList>
            <person name="Boelens R."/>
            <person name="Lamerichs R.M.J.N."/>
            <person name="Rullmann J.A.C."/>
            <person name="van Boom J.H."/>
            <person name="Kaptein R."/>
        </authorList>
    </citation>
    <scope>STRUCTURE BY NMR</scope>
</reference>
<reference key="18">
    <citation type="journal article" date="1989" name="Biochemistry">
        <title>H NMR study of a complex between the lac repressor headpiece and a 22 base pair symmetric lac operator.</title>
        <authorList>
            <person name="Lamerichs R.M.J.N."/>
            <person name="Boelens R."/>
            <person name="van der Marel G.A."/>
            <person name="van Boom J.H."/>
            <person name="Kaptein R."/>
            <person name="Buck F."/>
            <person name="Fera B."/>
            <person name="Rueterjans H."/>
        </authorList>
    </citation>
    <scope>STRUCTURE BY NMR</scope>
</reference>
<reference key="19">
    <citation type="journal article" date="1996" name="J. Mol. Biol.">
        <title>Refined structure of lac repressor headpiece (1-56) determined by relaxation matrix calculations from 2D and 3D NOE data: change of tertiary structure upon binding to the lac operator.</title>
        <authorList>
            <person name="Slijper M."/>
            <person name="Bonvin A.M."/>
            <person name="Boelens R."/>
            <person name="Kaptein R."/>
        </authorList>
    </citation>
    <scope>STRUCTURE BY NMR OF 1-56</scope>
</reference>
<reference key="20">
    <citation type="journal article" date="1999" name="Structure">
        <title>The solution structure of Lac repressor headpiece 62 complexed to a symmetrical lac operator.</title>
        <authorList>
            <person name="Spronk C.A."/>
            <person name="Bonvin A.M."/>
            <person name="Radha P.K."/>
            <person name="Melacini G."/>
            <person name="Boelens R."/>
            <person name="Kaptein R."/>
        </authorList>
    </citation>
    <scope>STRUCTURE BY NMR OF 1-62</scope>
</reference>
<reference key="21">
    <citation type="journal article" date="1996" name="Science">
        <title>Crystal structure of the lactose operon repressor and its complexes with DNA and inducer.</title>
        <authorList>
            <person name="Lewis M."/>
            <person name="Chang G."/>
            <person name="Horton N.C."/>
            <person name="Kercher M.A."/>
            <person name="Pace H.C."/>
            <person name="Schumacher M.A."/>
            <person name="Brennan R.G."/>
            <person name="Lu P."/>
        </authorList>
    </citation>
    <scope>X-RAY CRYSTALLOGRAPHY (4.8 ANGSTROMS)</scope>
</reference>
<sequence>MKPVTLYDVAEYAGVSYQTVSRVVNQASHVSAKTREKVEAAMAELNYIPNRVAQQLAGKQSLLIGVATSSLALHAPSQIVAAIKSRADQLGASVVVSMVERSGVEACKAAVHNLLAQRVSGLIINYPLDDQDAIAVEAACTNVPALFLDVSDQTPINSIIFSHEDGTRLGVEHLVALGHQQIALLAGPLSSVSARLRLAGWHKYLTRNQIQPIAEREGDWSAMSGFQQTMQMLNEGIVPTAMLVANDQMALGAMRAITESGLRVGADISVVGYDDTEDSSCYIPPLTTIKQDFRLLGQTSVDRLLQLSQGQAVKGNQLLPVSLVKRKTTLAPNTQTASPRALADSLMQLARQVSRLESGQ</sequence>
<comment type="function">
    <text>Repressor of the lactose operon. Binds allolactose as an inducer.</text>
</comment>
<comment type="subunit">
    <text>Homotetramer.</text>
</comment>
<comment type="interaction">
    <interactant intactId="EBI-909231">
        <id>P03023</id>
    </interactant>
    <interactant intactId="EBI-909231">
        <id>P03023</id>
        <label>lacI</label>
    </interactant>
    <organismsDiffer>false</organismsDiffer>
    <experiments>3</experiments>
</comment>
<comment type="miscellaneous">
    <text>Removing residues 1-59 results in loss of DNA-binding activity but retains tetrameric structure and inducer-binding activity. Deleting residues 340-360 results in loss of tetramer formation, but retains dimer formation, inducer-binding activity, and DNA-binding activity (if residues 1-59 are present).</text>
</comment>
<comment type="sequence caution" evidence="2">
    <conflict type="erroneous initiation">
        <sequence resource="EMBL-CDS" id="AAB18069"/>
    </conflict>
</comment>
<comment type="sequence caution" evidence="2">
    <conflict type="erroneous initiation">
        <sequence resource="EMBL-CDS" id="AAB47270"/>
    </conflict>
</comment>
<protein>
    <recommendedName>
        <fullName>Lactose operon repressor</fullName>
    </recommendedName>
</protein>